<sequence length="197" mass="21456">MKLIVGMTGATGAPLGVALLQALREMPNVETHLVMSKWAKTTIELETPYSARDVAALADFSHNPADQAAIISSGSFRTDGMIVIPCSMKTLAGIRAGYADGLVGRAADVVLKEGRKLVLVPREMPLSTIHLENMLALSRMGVAMVPPMPAFYNHPETVDDIVHHVVARVLDQFGLEHPHARRWQGLPQARNFSQENE</sequence>
<feature type="chain" id="PRO_0000134965" description="Probable UbiX-like flavin prenyltransferase">
    <location>
        <begin position="1"/>
        <end position="197"/>
    </location>
</feature>
<feature type="binding site" evidence="1">
    <location>
        <begin position="9"/>
        <end position="11"/>
    </location>
    <ligand>
        <name>FMN</name>
        <dbReference type="ChEBI" id="CHEBI:58210"/>
    </ligand>
</feature>
<feature type="binding site" evidence="1">
    <location>
        <position position="36"/>
    </location>
    <ligand>
        <name>FMN</name>
        <dbReference type="ChEBI" id="CHEBI:58210"/>
    </ligand>
</feature>
<feature type="binding site" evidence="1">
    <location>
        <begin position="87"/>
        <end position="90"/>
    </location>
    <ligand>
        <name>FMN</name>
        <dbReference type="ChEBI" id="CHEBI:58210"/>
    </ligand>
</feature>
<feature type="binding site" evidence="1">
    <location>
        <position position="122"/>
    </location>
    <ligand>
        <name>FMN</name>
        <dbReference type="ChEBI" id="CHEBI:58210"/>
    </ligand>
</feature>
<feature type="sequence variant" description="In strain: DEC 1a.">
    <original>K</original>
    <variation>T</variation>
    <location>
        <position position="37"/>
    </location>
</feature>
<feature type="sequence variant" description="In strain: DEC 1a.">
    <original>R</original>
    <variation>H</variation>
    <location>
        <position position="52"/>
    </location>
</feature>
<feature type="sequence variant" description="In strain: DEC 1a.">
    <original>I</original>
    <variation>T</variation>
    <location>
        <position position="70"/>
    </location>
</feature>
<feature type="sequence variant" description="In strain: DEC 1a.">
    <original>M</original>
    <variation>T</variation>
    <location>
        <position position="124"/>
    </location>
</feature>
<dbReference type="EC" id="2.5.1.129" evidence="1"/>
<dbReference type="EMBL" id="AF242209">
    <property type="protein sequence ID" value="AAG14979.1"/>
    <property type="molecule type" value="Genomic_DNA"/>
</dbReference>
<dbReference type="EMBL" id="AF242210">
    <property type="protein sequence ID" value="AAG14986.1"/>
    <property type="molecule type" value="Genomic_DNA"/>
</dbReference>
<dbReference type="RefSeq" id="WP_000767718.1">
    <property type="nucleotide sequence ID" value="NZ_WXZA01000008.1"/>
</dbReference>
<dbReference type="RefSeq" id="WP_000767729.1">
    <property type="nucleotide sequence ID" value="NZ_UGGC01000001.1"/>
</dbReference>
<dbReference type="SMR" id="P69774"/>
<dbReference type="STRING" id="585034.ECIAI1_2838"/>
<dbReference type="OMA" id="FVHERYL"/>
<dbReference type="GO" id="GO:0016831">
    <property type="term" value="F:carboxy-lyase activity"/>
    <property type="evidence" value="ECO:0007669"/>
    <property type="project" value="TreeGrafter"/>
</dbReference>
<dbReference type="GO" id="GO:0106141">
    <property type="term" value="F:flavin prenyltransferase activity"/>
    <property type="evidence" value="ECO:0007669"/>
    <property type="project" value="UniProtKB-EC"/>
</dbReference>
<dbReference type="FunFam" id="3.40.50.1950:FF:000001">
    <property type="entry name" value="Flavin prenyltransferase UbiX"/>
    <property type="match status" value="1"/>
</dbReference>
<dbReference type="Gene3D" id="3.40.50.1950">
    <property type="entry name" value="Flavin prenyltransferase-like"/>
    <property type="match status" value="1"/>
</dbReference>
<dbReference type="HAMAP" id="MF_01984">
    <property type="entry name" value="ubiX_pad"/>
    <property type="match status" value="1"/>
</dbReference>
<dbReference type="HAMAP" id="MF_01986">
    <property type="entry name" value="ubiX_pad_yclB"/>
    <property type="match status" value="1"/>
</dbReference>
<dbReference type="InterPro" id="IPR036551">
    <property type="entry name" value="Flavin_trans-like"/>
</dbReference>
<dbReference type="InterPro" id="IPR003382">
    <property type="entry name" value="Flavoprotein"/>
</dbReference>
<dbReference type="InterPro" id="IPR004507">
    <property type="entry name" value="UbiX-like"/>
</dbReference>
<dbReference type="InterPro" id="IPR032901">
    <property type="entry name" value="UbiX_pad_YclB"/>
</dbReference>
<dbReference type="NCBIfam" id="NF004685">
    <property type="entry name" value="PRK06029.1"/>
    <property type="match status" value="1"/>
</dbReference>
<dbReference type="NCBIfam" id="TIGR00421">
    <property type="entry name" value="ubiX_pad"/>
    <property type="match status" value="1"/>
</dbReference>
<dbReference type="NCBIfam" id="NF041206">
    <property type="entry name" value="VdcB"/>
    <property type="match status" value="1"/>
</dbReference>
<dbReference type="PANTHER" id="PTHR43374">
    <property type="entry name" value="FLAVIN PRENYLTRANSFERASE"/>
    <property type="match status" value="1"/>
</dbReference>
<dbReference type="PANTHER" id="PTHR43374:SF1">
    <property type="entry name" value="FLAVIN PRENYLTRANSFERASE PAD1, MITOCHONDRIAL"/>
    <property type="match status" value="1"/>
</dbReference>
<dbReference type="Pfam" id="PF02441">
    <property type="entry name" value="Flavoprotein"/>
    <property type="match status" value="1"/>
</dbReference>
<dbReference type="SUPFAM" id="SSF52507">
    <property type="entry name" value="Homo-oligomeric flavin-containing Cys decarboxylases, HFCD"/>
    <property type="match status" value="1"/>
</dbReference>
<name>PADL_ECOLX</name>
<accession>P69774</accession>
<accession>Q9X728</accession>
<evidence type="ECO:0000255" key="1">
    <source>
        <dbReference type="HAMAP-Rule" id="MF_01986"/>
    </source>
</evidence>
<keyword id="KW-0285">Flavoprotein</keyword>
<keyword id="KW-0288">FMN</keyword>
<keyword id="KW-0637">Prenyltransferase</keyword>
<keyword id="KW-0808">Transferase</keyword>
<gene>
    <name type="primary">ecdB</name>
    <name type="synonym">pad1</name>
</gene>
<comment type="function">
    <text evidence="1">Flavin prenyltransferase that catalyzes the synthesis of the prenylated FMN cofactor (prenyl-FMN) for phenolic acid decarboxylase C. Involved in the decarboxylation and detoxification of phenolic derivatives under both aerobic and anaerobic conditions.</text>
</comment>
<comment type="catalytic activity">
    <reaction evidence="1">
        <text>dimethylallyl phosphate + FMNH2 = prenylated FMNH2 + phosphate</text>
        <dbReference type="Rhea" id="RHEA:37743"/>
        <dbReference type="ChEBI" id="CHEBI:43474"/>
        <dbReference type="ChEBI" id="CHEBI:57618"/>
        <dbReference type="ChEBI" id="CHEBI:87467"/>
        <dbReference type="ChEBI" id="CHEBI:88052"/>
        <dbReference type="EC" id="2.5.1.129"/>
    </reaction>
</comment>
<comment type="subunit">
    <text evidence="1">Homododecamer.</text>
</comment>
<comment type="similarity">
    <text evidence="1">Belongs to the UbiX/PAD1 family. YclB subfamily.</text>
</comment>
<organism>
    <name type="scientific">Escherichia coli</name>
    <dbReference type="NCBI Taxonomy" id="562"/>
    <lineage>
        <taxon>Bacteria</taxon>
        <taxon>Pseudomonadati</taxon>
        <taxon>Pseudomonadota</taxon>
        <taxon>Gammaproteobacteria</taxon>
        <taxon>Enterobacterales</taxon>
        <taxon>Enterobacteriaceae</taxon>
        <taxon>Escherichia</taxon>
    </lineage>
</organism>
<reference key="1">
    <citation type="journal article" date="2000" name="J. Bacteriol.">
        <title>Gene conservation and loss in the mutS-rpoS genomic region of pathogenic Escherichia coli.</title>
        <authorList>
            <person name="Herbelin C.J."/>
            <person name="Chirillo S.C."/>
            <person name="Melnick K.A."/>
            <person name="Whittam T.S."/>
        </authorList>
    </citation>
    <scope>NUCLEOTIDE SEQUENCE [GENOMIC DNA]</scope>
    <source>
        <strain>O26:NM / DEC 9f / EHEC</strain>
        <strain>O55:H6 / DEC 1a / EPEC</strain>
    </source>
</reference>
<protein>
    <recommendedName>
        <fullName evidence="1">Probable UbiX-like flavin prenyltransferase</fullName>
        <ecNumber evidence="1">2.5.1.129</ecNumber>
    </recommendedName>
    <alternativeName>
        <fullName evidence="1">4-hydroxybenzoate decarboxylase subunit B</fullName>
    </alternativeName>
    <alternativeName>
        <fullName evidence="1">Phenolic acid decarboxylase subunit B</fullName>
    </alternativeName>
</protein>
<proteinExistence type="inferred from homology"/>